<gene>
    <name evidence="1" type="primary">bioF</name>
    <name type="ordered locus">H16_A0181</name>
</gene>
<feature type="chain" id="PRO_0000381086" description="8-amino-7-oxononanoate synthase">
    <location>
        <begin position="1"/>
        <end position="404"/>
    </location>
</feature>
<feature type="binding site" evidence="1">
    <location>
        <position position="20"/>
    </location>
    <ligand>
        <name>substrate</name>
    </ligand>
</feature>
<feature type="binding site" evidence="1">
    <location>
        <begin position="116"/>
        <end position="117"/>
    </location>
    <ligand>
        <name>pyridoxal 5'-phosphate</name>
        <dbReference type="ChEBI" id="CHEBI:597326"/>
    </ligand>
</feature>
<feature type="binding site" evidence="1">
    <location>
        <position position="141"/>
    </location>
    <ligand>
        <name>substrate</name>
    </ligand>
</feature>
<feature type="binding site" evidence="1">
    <location>
        <position position="187"/>
    </location>
    <ligand>
        <name>pyridoxal 5'-phosphate</name>
        <dbReference type="ChEBI" id="CHEBI:597326"/>
    </ligand>
</feature>
<feature type="binding site" evidence="1">
    <location>
        <position position="215"/>
    </location>
    <ligand>
        <name>pyridoxal 5'-phosphate</name>
        <dbReference type="ChEBI" id="CHEBI:597326"/>
    </ligand>
</feature>
<feature type="binding site" evidence="1">
    <location>
        <position position="243"/>
    </location>
    <ligand>
        <name>pyridoxal 5'-phosphate</name>
        <dbReference type="ChEBI" id="CHEBI:597326"/>
    </ligand>
</feature>
<feature type="binding site" evidence="1">
    <location>
        <position position="366"/>
    </location>
    <ligand>
        <name>substrate</name>
    </ligand>
</feature>
<feature type="modified residue" description="N6-(pyridoxal phosphate)lysine" evidence="1">
    <location>
        <position position="246"/>
    </location>
</feature>
<dbReference type="EC" id="2.3.1.47" evidence="1"/>
<dbReference type="EMBL" id="AM260479">
    <property type="protein sequence ID" value="CAJ91333.1"/>
    <property type="molecule type" value="Genomic_DNA"/>
</dbReference>
<dbReference type="RefSeq" id="WP_010813269.1">
    <property type="nucleotide sequence ID" value="NZ_CP039287.1"/>
</dbReference>
<dbReference type="SMR" id="Q0KF88"/>
<dbReference type="STRING" id="381666.H16_A0181"/>
<dbReference type="KEGG" id="reh:H16_A0181"/>
<dbReference type="eggNOG" id="COG0156">
    <property type="taxonomic scope" value="Bacteria"/>
</dbReference>
<dbReference type="HOGENOM" id="CLU_015846_11_2_4"/>
<dbReference type="OrthoDB" id="9807157at2"/>
<dbReference type="UniPathway" id="UPA00078"/>
<dbReference type="Proteomes" id="UP000008210">
    <property type="component" value="Chromosome 1"/>
</dbReference>
<dbReference type="GO" id="GO:0008710">
    <property type="term" value="F:8-amino-7-oxononanoate synthase activity"/>
    <property type="evidence" value="ECO:0007669"/>
    <property type="project" value="UniProtKB-UniRule"/>
</dbReference>
<dbReference type="GO" id="GO:0030170">
    <property type="term" value="F:pyridoxal phosphate binding"/>
    <property type="evidence" value="ECO:0007669"/>
    <property type="project" value="UniProtKB-UniRule"/>
</dbReference>
<dbReference type="GO" id="GO:0009102">
    <property type="term" value="P:biotin biosynthetic process"/>
    <property type="evidence" value="ECO:0007669"/>
    <property type="project" value="UniProtKB-UniRule"/>
</dbReference>
<dbReference type="Gene3D" id="3.90.1150.10">
    <property type="entry name" value="Aspartate Aminotransferase, domain 1"/>
    <property type="match status" value="1"/>
</dbReference>
<dbReference type="Gene3D" id="3.40.640.10">
    <property type="entry name" value="Type I PLP-dependent aspartate aminotransferase-like (Major domain)"/>
    <property type="match status" value="1"/>
</dbReference>
<dbReference type="HAMAP" id="MF_01693">
    <property type="entry name" value="BioF_aminotrans_2"/>
    <property type="match status" value="1"/>
</dbReference>
<dbReference type="InterPro" id="IPR004839">
    <property type="entry name" value="Aminotransferase_I/II_large"/>
</dbReference>
<dbReference type="InterPro" id="IPR050087">
    <property type="entry name" value="AON_synthase_class-II"/>
</dbReference>
<dbReference type="InterPro" id="IPR004723">
    <property type="entry name" value="AONS_Archaea/Proteobacteria"/>
</dbReference>
<dbReference type="InterPro" id="IPR022834">
    <property type="entry name" value="AONS_Proteobacteria"/>
</dbReference>
<dbReference type="InterPro" id="IPR015424">
    <property type="entry name" value="PyrdxlP-dep_Trfase"/>
</dbReference>
<dbReference type="InterPro" id="IPR015421">
    <property type="entry name" value="PyrdxlP-dep_Trfase_major"/>
</dbReference>
<dbReference type="InterPro" id="IPR015422">
    <property type="entry name" value="PyrdxlP-dep_Trfase_small"/>
</dbReference>
<dbReference type="NCBIfam" id="TIGR00858">
    <property type="entry name" value="bioF"/>
    <property type="match status" value="1"/>
</dbReference>
<dbReference type="PANTHER" id="PTHR13693:SF100">
    <property type="entry name" value="8-AMINO-7-OXONONANOATE SYNTHASE"/>
    <property type="match status" value="1"/>
</dbReference>
<dbReference type="PANTHER" id="PTHR13693">
    <property type="entry name" value="CLASS II AMINOTRANSFERASE/8-AMINO-7-OXONONANOATE SYNTHASE"/>
    <property type="match status" value="1"/>
</dbReference>
<dbReference type="Pfam" id="PF00155">
    <property type="entry name" value="Aminotran_1_2"/>
    <property type="match status" value="1"/>
</dbReference>
<dbReference type="SUPFAM" id="SSF53383">
    <property type="entry name" value="PLP-dependent transferases"/>
    <property type="match status" value="1"/>
</dbReference>
<reference key="1">
    <citation type="journal article" date="2006" name="Nat. Biotechnol.">
        <title>Genome sequence of the bioplastic-producing 'Knallgas' bacterium Ralstonia eutropha H16.</title>
        <authorList>
            <person name="Pohlmann A."/>
            <person name="Fricke W.F."/>
            <person name="Reinecke F."/>
            <person name="Kusian B."/>
            <person name="Liesegang H."/>
            <person name="Cramm R."/>
            <person name="Eitinger T."/>
            <person name="Ewering C."/>
            <person name="Poetter M."/>
            <person name="Schwartz E."/>
            <person name="Strittmatter A."/>
            <person name="Voss I."/>
            <person name="Gottschalk G."/>
            <person name="Steinbuechel A."/>
            <person name="Friedrich B."/>
            <person name="Bowien B."/>
        </authorList>
    </citation>
    <scope>NUCLEOTIDE SEQUENCE [LARGE SCALE GENOMIC DNA]</scope>
    <source>
        <strain>ATCC 17699 / DSM 428 / KCTC 22496 / NCIMB 10442 / H16 / Stanier 337</strain>
    </source>
</reference>
<evidence type="ECO:0000255" key="1">
    <source>
        <dbReference type="HAMAP-Rule" id="MF_01693"/>
    </source>
</evidence>
<comment type="function">
    <text evidence="1">Catalyzes the decarboxylative condensation of pimeloyl-[acyl-carrier protein] and L-alanine to produce 8-amino-7-oxononanoate (AON), [acyl-carrier protein], and carbon dioxide.</text>
</comment>
<comment type="catalytic activity">
    <reaction evidence="1">
        <text>6-carboxyhexanoyl-[ACP] + L-alanine + H(+) = (8S)-8-amino-7-oxononanoate + holo-[ACP] + CO2</text>
        <dbReference type="Rhea" id="RHEA:42288"/>
        <dbReference type="Rhea" id="RHEA-COMP:9685"/>
        <dbReference type="Rhea" id="RHEA-COMP:9955"/>
        <dbReference type="ChEBI" id="CHEBI:15378"/>
        <dbReference type="ChEBI" id="CHEBI:16526"/>
        <dbReference type="ChEBI" id="CHEBI:57972"/>
        <dbReference type="ChEBI" id="CHEBI:64479"/>
        <dbReference type="ChEBI" id="CHEBI:78846"/>
        <dbReference type="ChEBI" id="CHEBI:149468"/>
        <dbReference type="EC" id="2.3.1.47"/>
    </reaction>
</comment>
<comment type="cofactor">
    <cofactor evidence="1">
        <name>pyridoxal 5'-phosphate</name>
        <dbReference type="ChEBI" id="CHEBI:597326"/>
    </cofactor>
</comment>
<comment type="pathway">
    <text evidence="1">Cofactor biosynthesis; biotin biosynthesis.</text>
</comment>
<comment type="subunit">
    <text evidence="1">Homodimer.</text>
</comment>
<comment type="similarity">
    <text evidence="1">Belongs to the class-II pyridoxal-phosphate-dependent aminotransferase family. BioF subfamily.</text>
</comment>
<organism>
    <name type="scientific">Cupriavidus necator (strain ATCC 17699 / DSM 428 / KCTC 22496 / NCIMB 10442 / H16 / Stanier 337)</name>
    <name type="common">Ralstonia eutropha</name>
    <dbReference type="NCBI Taxonomy" id="381666"/>
    <lineage>
        <taxon>Bacteria</taxon>
        <taxon>Pseudomonadati</taxon>
        <taxon>Pseudomonadota</taxon>
        <taxon>Betaproteobacteria</taxon>
        <taxon>Burkholderiales</taxon>
        <taxon>Burkholderiaceae</taxon>
        <taxon>Cupriavidus</taxon>
    </lineage>
</organism>
<proteinExistence type="inferred from homology"/>
<protein>
    <recommendedName>
        <fullName evidence="1">8-amino-7-oxononanoate synthase</fullName>
        <shortName evidence="1">AONS</shortName>
        <ecNumber evidence="1">2.3.1.47</ecNumber>
    </recommendedName>
    <alternativeName>
        <fullName evidence="1">7-keto-8-amino-pelargonic acid synthase</fullName>
        <shortName evidence="1">7-KAP synthase</shortName>
        <shortName evidence="1">KAPA synthase</shortName>
    </alternativeName>
    <alternativeName>
        <fullName evidence="1">8-amino-7-ketopelargonate synthase</fullName>
    </alternativeName>
</protein>
<sequence>MLLEQLRRAAEQRHALALTRRRRVAHTACAPHQAVGEDGSEPESLLTFCSNDYMGLANHPDVIAALVEGAQRYGAGSGASHLVSGHSLAHTQLEAELARWLAPHIPHACTLYFCTGYMANMAVLTALGTAGATLFCESLNHASLIDGARLARADVQRYPHCDTAALEALLAASTSERKLIVTDSVFSMDGNVAPLRKLLELAERHDAWIIVDDAHGFGVLGEQGHGVLEALGLSSERLIYIGTLGKAAGVAGAFVAAHETIIEHLVNTARPYIYTTAAPPAVAHALLASLAIIEGEEGTQRRAQLTRCIGMLREGLAQLAAIAGWTLGDSETAIQPLIVGDNGAALALSATLEADGIRVGAIRPPTVPEGTARLRITLSAAHTEDDVRRLLDALSAAVAQREVA</sequence>
<name>BIOF_CUPNH</name>
<keyword id="KW-0093">Biotin biosynthesis</keyword>
<keyword id="KW-0663">Pyridoxal phosphate</keyword>
<keyword id="KW-1185">Reference proteome</keyword>
<keyword id="KW-0808">Transferase</keyword>
<accession>Q0KF88</accession>